<comment type="function">
    <text evidence="1">Catalyzes the condensation of ATP and 5-phosphoribose 1-diphosphate to form N'-(5'-phosphoribosyl)-ATP (PR-ATP). Has a crucial role in the pathway because the rate of histidine biosynthesis seems to be controlled primarily by regulation of HisG enzymatic activity.</text>
</comment>
<comment type="catalytic activity">
    <reaction evidence="1">
        <text>1-(5-phospho-beta-D-ribosyl)-ATP + diphosphate = 5-phospho-alpha-D-ribose 1-diphosphate + ATP</text>
        <dbReference type="Rhea" id="RHEA:18473"/>
        <dbReference type="ChEBI" id="CHEBI:30616"/>
        <dbReference type="ChEBI" id="CHEBI:33019"/>
        <dbReference type="ChEBI" id="CHEBI:58017"/>
        <dbReference type="ChEBI" id="CHEBI:73183"/>
        <dbReference type="EC" id="2.4.2.17"/>
    </reaction>
</comment>
<comment type="cofactor">
    <cofactor evidence="1">
        <name>Mg(2+)</name>
        <dbReference type="ChEBI" id="CHEBI:18420"/>
    </cofactor>
</comment>
<comment type="activity regulation">
    <text evidence="1">Feedback inhibited by histidine.</text>
</comment>
<comment type="pathway">
    <text evidence="1">Amino-acid biosynthesis; L-histidine biosynthesis; L-histidine from 5-phospho-alpha-D-ribose 1-diphosphate: step 1/9.</text>
</comment>
<comment type="subunit">
    <text evidence="1">Equilibrium between an active dimeric form, an inactive hexameric form and higher aggregates. Interconversion between the various forms is largely reversible and is influenced by the natural substrates and inhibitors of the enzyme.</text>
</comment>
<comment type="subcellular location">
    <subcellularLocation>
        <location evidence="1">Cytoplasm</location>
    </subcellularLocation>
</comment>
<comment type="similarity">
    <text evidence="1">Belongs to the ATP phosphoribosyltransferase family. Long subfamily.</text>
</comment>
<proteinExistence type="inferred from homology"/>
<feature type="chain" id="PRO_1000202531" description="ATP phosphoribosyltransferase">
    <location>
        <begin position="1"/>
        <end position="299"/>
    </location>
</feature>
<sequence length="299" mass="33367">MTDNTRLRIAMQKSGRLSDDSRELLARCGIKINLHTQRLIAMAENMPIDILRVRDDDIPGLVMDGVVDLGIIGENVLEEELLNRRAQGEDPRYFTLRRLDFGGCRLSLATPVDEAWDGPLSLNGKRIATSYPHLLKRYLDQKGISFKSCLLNGSVEVAPRAGLADAICDLVSTGATLEANGLREVEVIYRSKACLIQRDGEMEESKQQLIDKLLTRIQGVIQARESKYIMMHAPTERLDEVIALLPGAERPTILPLAGDQQRVAMHMVSSETLFWETMEKLKALGASSILVLPIEKMME</sequence>
<name>HIS1_ECOBW</name>
<keyword id="KW-0028">Amino-acid biosynthesis</keyword>
<keyword id="KW-0067">ATP-binding</keyword>
<keyword id="KW-0963">Cytoplasm</keyword>
<keyword id="KW-0328">Glycosyltransferase</keyword>
<keyword id="KW-0368">Histidine biosynthesis</keyword>
<keyword id="KW-0460">Magnesium</keyword>
<keyword id="KW-0479">Metal-binding</keyword>
<keyword id="KW-0547">Nucleotide-binding</keyword>
<keyword id="KW-0808">Transferase</keyword>
<reference key="1">
    <citation type="journal article" date="2009" name="J. Bacteriol.">
        <title>Genomic sequencing reveals regulatory mutations and recombinational events in the widely used MC4100 lineage of Escherichia coli K-12.</title>
        <authorList>
            <person name="Ferenci T."/>
            <person name="Zhou Z."/>
            <person name="Betteridge T."/>
            <person name="Ren Y."/>
            <person name="Liu Y."/>
            <person name="Feng L."/>
            <person name="Reeves P.R."/>
            <person name="Wang L."/>
        </authorList>
    </citation>
    <scope>NUCLEOTIDE SEQUENCE [LARGE SCALE GENOMIC DNA]</scope>
    <source>
        <strain>K12 / MC4100 / BW2952</strain>
    </source>
</reference>
<organism>
    <name type="scientific">Escherichia coli (strain K12 / MC4100 / BW2952)</name>
    <dbReference type="NCBI Taxonomy" id="595496"/>
    <lineage>
        <taxon>Bacteria</taxon>
        <taxon>Pseudomonadati</taxon>
        <taxon>Pseudomonadota</taxon>
        <taxon>Gammaproteobacteria</taxon>
        <taxon>Enterobacterales</taxon>
        <taxon>Enterobacteriaceae</taxon>
        <taxon>Escherichia</taxon>
    </lineage>
</organism>
<dbReference type="EC" id="2.4.2.17" evidence="1"/>
<dbReference type="EMBL" id="CP001396">
    <property type="protein sequence ID" value="ACR62030.1"/>
    <property type="molecule type" value="Genomic_DNA"/>
</dbReference>
<dbReference type="RefSeq" id="WP_000131782.1">
    <property type="nucleotide sequence ID" value="NC_012759.1"/>
</dbReference>
<dbReference type="SMR" id="C4ZSA8"/>
<dbReference type="GeneID" id="93775154"/>
<dbReference type="KEGG" id="ebw:BWG_1810"/>
<dbReference type="HOGENOM" id="CLU_038115_1_0_6"/>
<dbReference type="UniPathway" id="UPA00031">
    <property type="reaction ID" value="UER00006"/>
</dbReference>
<dbReference type="GO" id="GO:0005737">
    <property type="term" value="C:cytoplasm"/>
    <property type="evidence" value="ECO:0007669"/>
    <property type="project" value="UniProtKB-SubCell"/>
</dbReference>
<dbReference type="GO" id="GO:0005524">
    <property type="term" value="F:ATP binding"/>
    <property type="evidence" value="ECO:0007669"/>
    <property type="project" value="UniProtKB-KW"/>
</dbReference>
<dbReference type="GO" id="GO:0003879">
    <property type="term" value="F:ATP phosphoribosyltransferase activity"/>
    <property type="evidence" value="ECO:0007669"/>
    <property type="project" value="UniProtKB-UniRule"/>
</dbReference>
<dbReference type="GO" id="GO:0000287">
    <property type="term" value="F:magnesium ion binding"/>
    <property type="evidence" value="ECO:0007669"/>
    <property type="project" value="UniProtKB-UniRule"/>
</dbReference>
<dbReference type="GO" id="GO:0000105">
    <property type="term" value="P:L-histidine biosynthetic process"/>
    <property type="evidence" value="ECO:0007669"/>
    <property type="project" value="UniProtKB-UniRule"/>
</dbReference>
<dbReference type="CDD" id="cd13592">
    <property type="entry name" value="PBP2_HisGL2"/>
    <property type="match status" value="1"/>
</dbReference>
<dbReference type="FunFam" id="3.30.70.120:FF:000002">
    <property type="entry name" value="ATP phosphoribosyltransferase"/>
    <property type="match status" value="1"/>
</dbReference>
<dbReference type="FunFam" id="3.40.190.10:FF:000008">
    <property type="entry name" value="ATP phosphoribosyltransferase"/>
    <property type="match status" value="1"/>
</dbReference>
<dbReference type="Gene3D" id="3.30.70.120">
    <property type="match status" value="1"/>
</dbReference>
<dbReference type="Gene3D" id="3.40.190.10">
    <property type="entry name" value="Periplasmic binding protein-like II"/>
    <property type="match status" value="2"/>
</dbReference>
<dbReference type="HAMAP" id="MF_00079">
    <property type="entry name" value="HisG_Long"/>
    <property type="match status" value="1"/>
</dbReference>
<dbReference type="InterPro" id="IPR020621">
    <property type="entry name" value="ATP-PRT_HisG_long"/>
</dbReference>
<dbReference type="InterPro" id="IPR013820">
    <property type="entry name" value="ATP_PRibTrfase_cat"/>
</dbReference>
<dbReference type="InterPro" id="IPR018198">
    <property type="entry name" value="ATP_PRibTrfase_CS"/>
</dbReference>
<dbReference type="InterPro" id="IPR001348">
    <property type="entry name" value="ATP_PRibTrfase_HisG"/>
</dbReference>
<dbReference type="InterPro" id="IPR013115">
    <property type="entry name" value="HisG_C"/>
</dbReference>
<dbReference type="InterPro" id="IPR011322">
    <property type="entry name" value="N-reg_PII-like_a/b"/>
</dbReference>
<dbReference type="InterPro" id="IPR015867">
    <property type="entry name" value="N-reg_PII/ATP_PRibTrfase_C"/>
</dbReference>
<dbReference type="NCBIfam" id="TIGR00070">
    <property type="entry name" value="hisG"/>
    <property type="match status" value="1"/>
</dbReference>
<dbReference type="NCBIfam" id="TIGR03455">
    <property type="entry name" value="HisG_C-term"/>
    <property type="match status" value="1"/>
</dbReference>
<dbReference type="PANTHER" id="PTHR21403:SF8">
    <property type="entry name" value="ATP PHOSPHORIBOSYLTRANSFERASE"/>
    <property type="match status" value="1"/>
</dbReference>
<dbReference type="PANTHER" id="PTHR21403">
    <property type="entry name" value="ATP PHOSPHORIBOSYLTRANSFERASE ATP-PRTASE"/>
    <property type="match status" value="1"/>
</dbReference>
<dbReference type="Pfam" id="PF01634">
    <property type="entry name" value="HisG"/>
    <property type="match status" value="1"/>
</dbReference>
<dbReference type="Pfam" id="PF08029">
    <property type="entry name" value="HisG_C"/>
    <property type="match status" value="1"/>
</dbReference>
<dbReference type="SUPFAM" id="SSF54913">
    <property type="entry name" value="GlnB-like"/>
    <property type="match status" value="1"/>
</dbReference>
<dbReference type="SUPFAM" id="SSF53850">
    <property type="entry name" value="Periplasmic binding protein-like II"/>
    <property type="match status" value="1"/>
</dbReference>
<dbReference type="PROSITE" id="PS01316">
    <property type="entry name" value="ATP_P_PHORIBOSYLTR"/>
    <property type="match status" value="1"/>
</dbReference>
<protein>
    <recommendedName>
        <fullName evidence="1">ATP phosphoribosyltransferase</fullName>
        <shortName evidence="1">ATP-PRT</shortName>
        <shortName evidence="1">ATP-PRTase</shortName>
        <ecNumber evidence="1">2.4.2.17</ecNumber>
    </recommendedName>
</protein>
<gene>
    <name evidence="1" type="primary">hisG</name>
    <name type="ordered locus">BWG_1810</name>
</gene>
<evidence type="ECO:0000255" key="1">
    <source>
        <dbReference type="HAMAP-Rule" id="MF_00079"/>
    </source>
</evidence>
<accession>C4ZSA8</accession>